<keyword id="KW-1185">Reference proteome</keyword>
<evidence type="ECO:0000250" key="1"/>
<evidence type="ECO:0000256" key="2">
    <source>
        <dbReference type="SAM" id="MobiDB-lite"/>
    </source>
</evidence>
<evidence type="ECO:0000305" key="3"/>
<reference key="1">
    <citation type="journal article" date="2004" name="Nature">
        <title>Genome evolution in yeasts.</title>
        <authorList>
            <person name="Dujon B."/>
            <person name="Sherman D."/>
            <person name="Fischer G."/>
            <person name="Durrens P."/>
            <person name="Casaregola S."/>
            <person name="Lafontaine I."/>
            <person name="de Montigny J."/>
            <person name="Marck C."/>
            <person name="Neuveglise C."/>
            <person name="Talla E."/>
            <person name="Goffard N."/>
            <person name="Frangeul L."/>
            <person name="Aigle M."/>
            <person name="Anthouard V."/>
            <person name="Babour A."/>
            <person name="Barbe V."/>
            <person name="Barnay S."/>
            <person name="Blanchin S."/>
            <person name="Beckerich J.-M."/>
            <person name="Beyne E."/>
            <person name="Bleykasten C."/>
            <person name="Boisrame A."/>
            <person name="Boyer J."/>
            <person name="Cattolico L."/>
            <person name="Confanioleri F."/>
            <person name="de Daruvar A."/>
            <person name="Despons L."/>
            <person name="Fabre E."/>
            <person name="Fairhead C."/>
            <person name="Ferry-Dumazet H."/>
            <person name="Groppi A."/>
            <person name="Hantraye F."/>
            <person name="Hennequin C."/>
            <person name="Jauniaux N."/>
            <person name="Joyet P."/>
            <person name="Kachouri R."/>
            <person name="Kerrest A."/>
            <person name="Koszul R."/>
            <person name="Lemaire M."/>
            <person name="Lesur I."/>
            <person name="Ma L."/>
            <person name="Muller H."/>
            <person name="Nicaud J.-M."/>
            <person name="Nikolski M."/>
            <person name="Oztas S."/>
            <person name="Ozier-Kalogeropoulos O."/>
            <person name="Pellenz S."/>
            <person name="Potier S."/>
            <person name="Richard G.-F."/>
            <person name="Straub M.-L."/>
            <person name="Suleau A."/>
            <person name="Swennen D."/>
            <person name="Tekaia F."/>
            <person name="Wesolowski-Louvel M."/>
            <person name="Westhof E."/>
            <person name="Wirth B."/>
            <person name="Zeniou-Meyer M."/>
            <person name="Zivanovic Y."/>
            <person name="Bolotin-Fukuhara M."/>
            <person name="Thierry A."/>
            <person name="Bouchier C."/>
            <person name="Caudron B."/>
            <person name="Scarpelli C."/>
            <person name="Gaillardin C."/>
            <person name="Weissenbach J."/>
            <person name="Wincker P."/>
            <person name="Souciet J.-L."/>
        </authorList>
    </citation>
    <scope>NUCLEOTIDE SEQUENCE [LARGE SCALE GENOMIC DNA]</scope>
    <source>
        <strain>ATCC 2001 / BCRC 20586 / JCM 3761 / NBRC 0622 / NRRL Y-65 / CBS 138</strain>
    </source>
</reference>
<feature type="chain" id="PRO_0000058187" description="pH-response regulator protein palF/RIM8">
    <location>
        <begin position="1"/>
        <end position="649"/>
    </location>
</feature>
<feature type="region of interest" description="Disordered" evidence="2">
    <location>
        <begin position="187"/>
        <end position="225"/>
    </location>
</feature>
<feature type="region of interest" description="Disordered" evidence="2">
    <location>
        <begin position="239"/>
        <end position="262"/>
    </location>
</feature>
<feature type="region of interest" description="Disordered" evidence="2">
    <location>
        <begin position="446"/>
        <end position="466"/>
    </location>
</feature>
<feature type="compositionally biased region" description="Polar residues" evidence="2">
    <location>
        <begin position="205"/>
        <end position="217"/>
    </location>
</feature>
<feature type="compositionally biased region" description="Polar residues" evidence="2">
    <location>
        <begin position="251"/>
        <end position="262"/>
    </location>
</feature>
<feature type="compositionally biased region" description="Polar residues" evidence="2">
    <location>
        <begin position="453"/>
        <end position="466"/>
    </location>
</feature>
<gene>
    <name type="primary">RIM8</name>
    <name type="ordered locus">CAGL0D06204g</name>
</gene>
<proteinExistence type="inferred from homology"/>
<accession>Q6FVR8</accession>
<organism>
    <name type="scientific">Candida glabrata (strain ATCC 2001 / BCRC 20586 / JCM 3761 / NBRC 0622 / NRRL Y-65 / CBS 138)</name>
    <name type="common">Yeast</name>
    <name type="synonym">Nakaseomyces glabratus</name>
    <dbReference type="NCBI Taxonomy" id="284593"/>
    <lineage>
        <taxon>Eukaryota</taxon>
        <taxon>Fungi</taxon>
        <taxon>Dikarya</taxon>
        <taxon>Ascomycota</taxon>
        <taxon>Saccharomycotina</taxon>
        <taxon>Saccharomycetes</taxon>
        <taxon>Saccharomycetales</taxon>
        <taxon>Saccharomycetaceae</taxon>
        <taxon>Nakaseomyces</taxon>
    </lineage>
</organism>
<sequence>MAFIKLLRKTKDEPSRLAKAVRHLQVTLDDPHATYRPRDVLFGQVLLDLKQNVANVRVRLTFIGEVKSKYGTAHKRGGCFMEKSTVLYGDDGDLDTDEMEPTVNGLTKGVHKFPFSIRVPSGKKIHSSIKFERGSVSYHLMAVFESVVEPEGVSAKVRTKVNILVPIDVYRYSDVVVKTILLNSNAKSKSHKINSNDHNGHLNGDVTTLTTSDGSSEGTKKTISESQIINNLSQRQVLQKSKSEGSKSESIQASTGQINQLPETSSQVSYNAVLTNGMNRDADNQTVKIDVRLPHSGFVQGEYIPLTINVSHYREYYHPAGVIATLVRVCKVASGRKEDTKEIYRKDICQSISPLLIESNKLENTISTYLKVPNDIIASMTSLPEHFTFQYFVEVVINLSRKLEIYSHSQKPLSYILEKQKTKKPLTIPRDLKELNLPASVNENGAWEVPRPSLNNEKSNGGIDSSRNDFQSKFGSAFNKSTLFGLKNIDEIHVAEQTIIFDDMVDVERLKRMRNVAGLSIETIIGNKRSSPAIDLAKLEISKLSQGKVMKSNGTSKNTSSSGSIESNSIVRYRYISFEQDTQSSTDSYDEDITKMGNQLNEWLSPANAYEEYYPVPEYSANENVFASEDKQELEYKRLHELESDPPQF</sequence>
<comment type="function">
    <text evidence="1">Required for the proteolytic cleavage of the transcription factor RIM101 in response to alkaline ambient pH.</text>
</comment>
<comment type="similarity">
    <text evidence="3">Belongs to the arrestin family. PalF/RIM8 subfamily.</text>
</comment>
<name>PALF_CANGA</name>
<dbReference type="EMBL" id="CR380950">
    <property type="protein sequence ID" value="CAG58587.1"/>
    <property type="molecule type" value="Genomic_DNA"/>
</dbReference>
<dbReference type="RefSeq" id="XP_445676.1">
    <property type="nucleotide sequence ID" value="XM_445676.1"/>
</dbReference>
<dbReference type="FunCoup" id="Q6FVR8">
    <property type="interactions" value="41"/>
</dbReference>
<dbReference type="STRING" id="284593.Q6FVR8"/>
<dbReference type="EnsemblFungi" id="CAGL0D06204g-T">
    <property type="protein sequence ID" value="CAGL0D06204g-T-p1"/>
    <property type="gene ID" value="CAGL0D06204g"/>
</dbReference>
<dbReference type="KEGG" id="cgr:2887003"/>
<dbReference type="CGD" id="CAL0128259">
    <property type="gene designation" value="CAGL0D06204g"/>
</dbReference>
<dbReference type="VEuPathDB" id="FungiDB:CAGL0D06204g"/>
<dbReference type="eggNOG" id="ENOG502QTQN">
    <property type="taxonomic scope" value="Eukaryota"/>
</dbReference>
<dbReference type="HOGENOM" id="CLU_006001_1_0_1"/>
<dbReference type="InParanoid" id="Q6FVR8"/>
<dbReference type="OMA" id="GMSIEIV"/>
<dbReference type="Proteomes" id="UP000002428">
    <property type="component" value="Chromosome D"/>
</dbReference>
<dbReference type="GO" id="GO:0009898">
    <property type="term" value="C:cytoplasmic side of plasma membrane"/>
    <property type="evidence" value="ECO:0007669"/>
    <property type="project" value="EnsemblFungi"/>
</dbReference>
<dbReference type="GO" id="GO:0005829">
    <property type="term" value="C:cytosol"/>
    <property type="evidence" value="ECO:0007669"/>
    <property type="project" value="TreeGrafter"/>
</dbReference>
<dbReference type="GO" id="GO:0030674">
    <property type="term" value="F:protein-macromolecule adaptor activity"/>
    <property type="evidence" value="ECO:0007669"/>
    <property type="project" value="TreeGrafter"/>
</dbReference>
<dbReference type="GO" id="GO:0031625">
    <property type="term" value="F:ubiquitin protein ligase binding"/>
    <property type="evidence" value="ECO:0007669"/>
    <property type="project" value="TreeGrafter"/>
</dbReference>
<dbReference type="GO" id="GO:0071230">
    <property type="term" value="P:cellular response to amino acid stimulus"/>
    <property type="evidence" value="ECO:0007669"/>
    <property type="project" value="EnsemblFungi"/>
</dbReference>
<dbReference type="GO" id="GO:0070086">
    <property type="term" value="P:ubiquitin-dependent endocytosis"/>
    <property type="evidence" value="ECO:0007669"/>
    <property type="project" value="EnsemblFungi"/>
</dbReference>
<dbReference type="Gene3D" id="2.60.40.640">
    <property type="match status" value="2"/>
</dbReference>
<dbReference type="InterPro" id="IPR014752">
    <property type="entry name" value="Arrestin-like_C"/>
</dbReference>
<dbReference type="InterPro" id="IPR011021">
    <property type="entry name" value="Arrestin-like_N"/>
</dbReference>
<dbReference type="InterPro" id="IPR011022">
    <property type="entry name" value="Arrestin_C-like"/>
</dbReference>
<dbReference type="InterPro" id="IPR050357">
    <property type="entry name" value="Arrestin_domain-protein"/>
</dbReference>
<dbReference type="InterPro" id="IPR014756">
    <property type="entry name" value="Ig_E-set"/>
</dbReference>
<dbReference type="PANTHER" id="PTHR11188">
    <property type="entry name" value="ARRESTIN DOMAIN CONTAINING PROTEIN"/>
    <property type="match status" value="1"/>
</dbReference>
<dbReference type="PANTHER" id="PTHR11188:SF161">
    <property type="entry name" value="PH-RESPONSE REGULATOR PROTEIN PALF_RIM8"/>
    <property type="match status" value="1"/>
</dbReference>
<dbReference type="Pfam" id="PF02752">
    <property type="entry name" value="Arrestin_C"/>
    <property type="match status" value="1"/>
</dbReference>
<dbReference type="Pfam" id="PF00339">
    <property type="entry name" value="Arrestin_N"/>
    <property type="match status" value="1"/>
</dbReference>
<dbReference type="SMART" id="SM01017">
    <property type="entry name" value="Arrestin_C"/>
    <property type="match status" value="1"/>
</dbReference>
<dbReference type="SUPFAM" id="SSF81296">
    <property type="entry name" value="E set domains"/>
    <property type="match status" value="1"/>
</dbReference>
<protein>
    <recommendedName>
        <fullName>pH-response regulator protein palF/RIM8</fullName>
    </recommendedName>
</protein>